<organism>
    <name type="scientific">Aliivibrio fischeri (strain ATCC 700601 / ES114)</name>
    <name type="common">Vibrio fischeri</name>
    <dbReference type="NCBI Taxonomy" id="312309"/>
    <lineage>
        <taxon>Bacteria</taxon>
        <taxon>Pseudomonadati</taxon>
        <taxon>Pseudomonadota</taxon>
        <taxon>Gammaproteobacteria</taxon>
        <taxon>Vibrionales</taxon>
        <taxon>Vibrionaceae</taxon>
        <taxon>Aliivibrio</taxon>
    </lineage>
</organism>
<sequence length="113" mass="12064">MSDVSVPLTFSDVAAAKVKTLIAEEENPNLKLRVYITGGGCSGFQYGFTFDEDVNEGDMTIENDGVTLVVDPMSLQYLIGGKVDYTEGLEGSRFFIDNPNATTTCGCGASFSV</sequence>
<evidence type="ECO:0000255" key="1">
    <source>
        <dbReference type="HAMAP-Rule" id="MF_01380"/>
    </source>
</evidence>
<comment type="function">
    <text evidence="1">Required for insertion of 4Fe-4S clusters for at least IspG.</text>
</comment>
<comment type="cofactor">
    <cofactor evidence="1">
        <name>iron-sulfur cluster</name>
        <dbReference type="ChEBI" id="CHEBI:30408"/>
    </cofactor>
    <text evidence="1">Binds 1 iron-sulfur cluster per subunit.</text>
</comment>
<comment type="subunit">
    <text evidence="1">Homodimer.</text>
</comment>
<comment type="similarity">
    <text evidence="1">Belongs to the HesB/IscA family.</text>
</comment>
<keyword id="KW-0408">Iron</keyword>
<keyword id="KW-0411">Iron-sulfur</keyword>
<keyword id="KW-0479">Metal-binding</keyword>
<keyword id="KW-1185">Reference proteome</keyword>
<name>ERPA_ALIF1</name>
<feature type="chain" id="PRO_0000311569" description="Iron-sulfur cluster insertion protein ErpA">
    <location>
        <begin position="1"/>
        <end position="113"/>
    </location>
</feature>
<feature type="binding site" evidence="1">
    <location>
        <position position="41"/>
    </location>
    <ligand>
        <name>iron-sulfur cluster</name>
        <dbReference type="ChEBI" id="CHEBI:30408"/>
    </ligand>
</feature>
<feature type="binding site" evidence="1">
    <location>
        <position position="105"/>
    </location>
    <ligand>
        <name>iron-sulfur cluster</name>
        <dbReference type="ChEBI" id="CHEBI:30408"/>
    </ligand>
</feature>
<feature type="binding site" evidence="1">
    <location>
        <position position="107"/>
    </location>
    <ligand>
        <name>iron-sulfur cluster</name>
        <dbReference type="ChEBI" id="CHEBI:30408"/>
    </ligand>
</feature>
<accession>Q5E2W7</accession>
<gene>
    <name evidence="1" type="primary">erpA</name>
    <name type="ordered locus">VF_2134</name>
</gene>
<protein>
    <recommendedName>
        <fullName evidence="1">Iron-sulfur cluster insertion protein ErpA</fullName>
    </recommendedName>
</protein>
<dbReference type="EMBL" id="CP000020">
    <property type="protein sequence ID" value="AAW86629.1"/>
    <property type="molecule type" value="Genomic_DNA"/>
</dbReference>
<dbReference type="RefSeq" id="WP_005420796.1">
    <property type="nucleotide sequence ID" value="NZ_CAWLES010000001.1"/>
</dbReference>
<dbReference type="RefSeq" id="YP_205517.1">
    <property type="nucleotide sequence ID" value="NC_006840.2"/>
</dbReference>
<dbReference type="SMR" id="Q5E2W7"/>
<dbReference type="STRING" id="312309.VF_2134"/>
<dbReference type="EnsemblBacteria" id="AAW86629">
    <property type="protein sequence ID" value="AAW86629"/>
    <property type="gene ID" value="VF_2134"/>
</dbReference>
<dbReference type="GeneID" id="54164844"/>
<dbReference type="KEGG" id="vfi:VF_2134"/>
<dbReference type="PATRIC" id="fig|312309.11.peg.2176"/>
<dbReference type="eggNOG" id="COG0316">
    <property type="taxonomic scope" value="Bacteria"/>
</dbReference>
<dbReference type="HOGENOM" id="CLU_069054_5_3_6"/>
<dbReference type="OrthoDB" id="9801228at2"/>
<dbReference type="Proteomes" id="UP000000537">
    <property type="component" value="Chromosome I"/>
</dbReference>
<dbReference type="GO" id="GO:0005829">
    <property type="term" value="C:cytosol"/>
    <property type="evidence" value="ECO:0007669"/>
    <property type="project" value="TreeGrafter"/>
</dbReference>
<dbReference type="GO" id="GO:0051537">
    <property type="term" value="F:2 iron, 2 sulfur cluster binding"/>
    <property type="evidence" value="ECO:0007669"/>
    <property type="project" value="TreeGrafter"/>
</dbReference>
<dbReference type="GO" id="GO:0051539">
    <property type="term" value="F:4 iron, 4 sulfur cluster binding"/>
    <property type="evidence" value="ECO:0007669"/>
    <property type="project" value="TreeGrafter"/>
</dbReference>
<dbReference type="GO" id="GO:0005506">
    <property type="term" value="F:iron ion binding"/>
    <property type="evidence" value="ECO:0007669"/>
    <property type="project" value="UniProtKB-UniRule"/>
</dbReference>
<dbReference type="GO" id="GO:0016226">
    <property type="term" value="P:iron-sulfur cluster assembly"/>
    <property type="evidence" value="ECO:0007669"/>
    <property type="project" value="UniProtKB-UniRule"/>
</dbReference>
<dbReference type="FunFam" id="2.60.300.12:FF:000002">
    <property type="entry name" value="Iron-sulfur cluster insertion protein ErpA"/>
    <property type="match status" value="1"/>
</dbReference>
<dbReference type="Gene3D" id="2.60.300.12">
    <property type="entry name" value="HesB-like domain"/>
    <property type="match status" value="1"/>
</dbReference>
<dbReference type="HAMAP" id="MF_01380">
    <property type="entry name" value="Fe_S_insert_ErpA"/>
    <property type="match status" value="1"/>
</dbReference>
<dbReference type="InterPro" id="IPR000361">
    <property type="entry name" value="FeS_biogenesis"/>
</dbReference>
<dbReference type="InterPro" id="IPR016092">
    <property type="entry name" value="FeS_cluster_insertion"/>
</dbReference>
<dbReference type="InterPro" id="IPR017870">
    <property type="entry name" value="FeS_cluster_insertion_CS"/>
</dbReference>
<dbReference type="InterPro" id="IPR023063">
    <property type="entry name" value="FeS_cluster_insertion_RrpA"/>
</dbReference>
<dbReference type="InterPro" id="IPR035903">
    <property type="entry name" value="HesB-like_dom_sf"/>
</dbReference>
<dbReference type="NCBIfam" id="TIGR00049">
    <property type="entry name" value="iron-sulfur cluster assembly accessory protein"/>
    <property type="match status" value="1"/>
</dbReference>
<dbReference type="NCBIfam" id="NF010147">
    <property type="entry name" value="PRK13623.1"/>
    <property type="match status" value="1"/>
</dbReference>
<dbReference type="PANTHER" id="PTHR43011">
    <property type="entry name" value="IRON-SULFUR CLUSTER ASSEMBLY 2 HOMOLOG, MITOCHONDRIAL"/>
    <property type="match status" value="1"/>
</dbReference>
<dbReference type="PANTHER" id="PTHR43011:SF1">
    <property type="entry name" value="IRON-SULFUR CLUSTER ASSEMBLY 2 HOMOLOG, MITOCHONDRIAL"/>
    <property type="match status" value="1"/>
</dbReference>
<dbReference type="Pfam" id="PF01521">
    <property type="entry name" value="Fe-S_biosyn"/>
    <property type="match status" value="1"/>
</dbReference>
<dbReference type="SUPFAM" id="SSF89360">
    <property type="entry name" value="HesB-like domain"/>
    <property type="match status" value="1"/>
</dbReference>
<dbReference type="PROSITE" id="PS01152">
    <property type="entry name" value="HESB"/>
    <property type="match status" value="1"/>
</dbReference>
<proteinExistence type="inferred from homology"/>
<reference key="1">
    <citation type="journal article" date="2005" name="Proc. Natl. Acad. Sci. U.S.A.">
        <title>Complete genome sequence of Vibrio fischeri: a symbiotic bacterium with pathogenic congeners.</title>
        <authorList>
            <person name="Ruby E.G."/>
            <person name="Urbanowski M."/>
            <person name="Campbell J."/>
            <person name="Dunn A."/>
            <person name="Faini M."/>
            <person name="Gunsalus R."/>
            <person name="Lostroh P."/>
            <person name="Lupp C."/>
            <person name="McCann J."/>
            <person name="Millikan D."/>
            <person name="Schaefer A."/>
            <person name="Stabb E."/>
            <person name="Stevens A."/>
            <person name="Visick K."/>
            <person name="Whistler C."/>
            <person name="Greenberg E.P."/>
        </authorList>
    </citation>
    <scope>NUCLEOTIDE SEQUENCE [LARGE SCALE GENOMIC DNA]</scope>
    <source>
        <strain>ATCC 700601 / ES114</strain>
    </source>
</reference>